<organism>
    <name type="scientific">Polynucleobacter necessarius subsp. necessarius (strain STIR1)</name>
    <dbReference type="NCBI Taxonomy" id="452638"/>
    <lineage>
        <taxon>Bacteria</taxon>
        <taxon>Pseudomonadati</taxon>
        <taxon>Pseudomonadota</taxon>
        <taxon>Betaproteobacteria</taxon>
        <taxon>Burkholderiales</taxon>
        <taxon>Burkholderiaceae</taxon>
        <taxon>Polynucleobacter</taxon>
    </lineage>
</organism>
<comment type="function">
    <text evidence="1">May play a role in DNA repair. It seems to be involved in an RecBC-independent recombinational process of DNA repair. It may act with RecF and RecO.</text>
</comment>
<comment type="similarity">
    <text evidence="1">Belongs to the RecR family.</text>
</comment>
<evidence type="ECO:0000255" key="1">
    <source>
        <dbReference type="HAMAP-Rule" id="MF_00017"/>
    </source>
</evidence>
<gene>
    <name evidence="1" type="primary">recR</name>
    <name type="ordered locus">Pnec_0646</name>
</gene>
<name>RECR_POLNS</name>
<keyword id="KW-0227">DNA damage</keyword>
<keyword id="KW-0233">DNA recombination</keyword>
<keyword id="KW-0234">DNA repair</keyword>
<keyword id="KW-0479">Metal-binding</keyword>
<keyword id="KW-0862">Zinc</keyword>
<keyword id="KW-0863">Zinc-finger</keyword>
<proteinExistence type="inferred from homology"/>
<accession>B1XU64</accession>
<dbReference type="EMBL" id="CP001010">
    <property type="protein sequence ID" value="ACB43891.1"/>
    <property type="molecule type" value="Genomic_DNA"/>
</dbReference>
<dbReference type="SMR" id="B1XU64"/>
<dbReference type="STRING" id="452638.Pnec_0646"/>
<dbReference type="KEGG" id="pne:Pnec_0646"/>
<dbReference type="eggNOG" id="COG0353">
    <property type="taxonomic scope" value="Bacteria"/>
</dbReference>
<dbReference type="HOGENOM" id="CLU_060739_1_2_4"/>
<dbReference type="OrthoDB" id="9802672at2"/>
<dbReference type="GO" id="GO:0003677">
    <property type="term" value="F:DNA binding"/>
    <property type="evidence" value="ECO:0007669"/>
    <property type="project" value="UniProtKB-UniRule"/>
</dbReference>
<dbReference type="GO" id="GO:0008270">
    <property type="term" value="F:zinc ion binding"/>
    <property type="evidence" value="ECO:0007669"/>
    <property type="project" value="UniProtKB-KW"/>
</dbReference>
<dbReference type="GO" id="GO:0006310">
    <property type="term" value="P:DNA recombination"/>
    <property type="evidence" value="ECO:0007669"/>
    <property type="project" value="UniProtKB-UniRule"/>
</dbReference>
<dbReference type="GO" id="GO:0006281">
    <property type="term" value="P:DNA repair"/>
    <property type="evidence" value="ECO:0007669"/>
    <property type="project" value="UniProtKB-UniRule"/>
</dbReference>
<dbReference type="CDD" id="cd01025">
    <property type="entry name" value="TOPRIM_recR"/>
    <property type="match status" value="1"/>
</dbReference>
<dbReference type="Gene3D" id="3.40.1360.10">
    <property type="match status" value="1"/>
</dbReference>
<dbReference type="Gene3D" id="6.10.250.240">
    <property type="match status" value="1"/>
</dbReference>
<dbReference type="Gene3D" id="1.10.8.420">
    <property type="entry name" value="RecR Domain 1"/>
    <property type="match status" value="1"/>
</dbReference>
<dbReference type="HAMAP" id="MF_00017">
    <property type="entry name" value="RecR"/>
    <property type="match status" value="1"/>
</dbReference>
<dbReference type="InterPro" id="IPR000093">
    <property type="entry name" value="DNA_Rcmb_RecR"/>
</dbReference>
<dbReference type="InterPro" id="IPR023627">
    <property type="entry name" value="Rcmb_RecR"/>
</dbReference>
<dbReference type="InterPro" id="IPR006171">
    <property type="entry name" value="TOPRIM_dom"/>
</dbReference>
<dbReference type="InterPro" id="IPR034137">
    <property type="entry name" value="TOPRIM_RecR"/>
</dbReference>
<dbReference type="NCBIfam" id="TIGR00615">
    <property type="entry name" value="recR"/>
    <property type="match status" value="1"/>
</dbReference>
<dbReference type="PANTHER" id="PTHR30446">
    <property type="entry name" value="RECOMBINATION PROTEIN RECR"/>
    <property type="match status" value="1"/>
</dbReference>
<dbReference type="PANTHER" id="PTHR30446:SF0">
    <property type="entry name" value="RECOMBINATION PROTEIN RECR"/>
    <property type="match status" value="1"/>
</dbReference>
<dbReference type="Pfam" id="PF21175">
    <property type="entry name" value="RecR_C"/>
    <property type="match status" value="1"/>
</dbReference>
<dbReference type="Pfam" id="PF21176">
    <property type="entry name" value="RecR_HhH"/>
    <property type="match status" value="1"/>
</dbReference>
<dbReference type="Pfam" id="PF13662">
    <property type="entry name" value="Toprim_4"/>
    <property type="match status" value="1"/>
</dbReference>
<dbReference type="SMART" id="SM00493">
    <property type="entry name" value="TOPRIM"/>
    <property type="match status" value="1"/>
</dbReference>
<dbReference type="SUPFAM" id="SSF111304">
    <property type="entry name" value="Recombination protein RecR"/>
    <property type="match status" value="1"/>
</dbReference>
<dbReference type="PROSITE" id="PS50880">
    <property type="entry name" value="TOPRIM"/>
    <property type="match status" value="1"/>
</dbReference>
<feature type="chain" id="PRO_1000089754" description="Recombination protein RecR">
    <location>
        <begin position="1"/>
        <end position="204"/>
    </location>
</feature>
<feature type="domain" description="Toprim" evidence="1">
    <location>
        <begin position="84"/>
        <end position="183"/>
    </location>
</feature>
<feature type="zinc finger region" description="C4-type" evidence="1">
    <location>
        <begin position="61"/>
        <end position="76"/>
    </location>
</feature>
<sequence>MARIEAPQDALGRLIEALRVLPGVGPKSAQRMAFYLLQHDRNGAAVLAQSLGEAVETVGHCACCNTFSETQVCSTCSDERRDPSLLCIVETPADQVMVEQTLSFKGNYFVLMGRLSPLDGMGPNEISFDRLLNRIETPDTGVPIREVVLATNFTSEGEATAHYIGEVLKPKGIKVTRIARGIPVGGELEYVDAGTLARALMDRR</sequence>
<protein>
    <recommendedName>
        <fullName evidence="1">Recombination protein RecR</fullName>
    </recommendedName>
</protein>
<reference key="1">
    <citation type="journal article" date="2013" name="Proc. Natl. Acad. Sci. U.S.A.">
        <title>Polynucleobacter necessarius, a model for genome reduction in both free-living and symbiotic bacteria.</title>
        <authorList>
            <person name="Boscaro V."/>
            <person name="Felletti M."/>
            <person name="Vannini C."/>
            <person name="Ackerman M.S."/>
            <person name="Chain P.S."/>
            <person name="Malfatti S."/>
            <person name="Vergez L.M."/>
            <person name="Shin M."/>
            <person name="Doak T.G."/>
            <person name="Lynch M."/>
            <person name="Petroni G."/>
        </authorList>
    </citation>
    <scope>NUCLEOTIDE SEQUENCE [LARGE SCALE GENOMIC DNA]</scope>
    <source>
        <strain>STIR1</strain>
    </source>
</reference>